<organism evidence="10">
    <name type="scientific">Drosophila melanogaster</name>
    <name type="common">Fruit fly</name>
    <dbReference type="NCBI Taxonomy" id="7227"/>
    <lineage>
        <taxon>Eukaryota</taxon>
        <taxon>Metazoa</taxon>
        <taxon>Ecdysozoa</taxon>
        <taxon>Arthropoda</taxon>
        <taxon>Hexapoda</taxon>
        <taxon>Insecta</taxon>
        <taxon>Pterygota</taxon>
        <taxon>Neoptera</taxon>
        <taxon>Endopterygota</taxon>
        <taxon>Diptera</taxon>
        <taxon>Brachycera</taxon>
        <taxon>Muscomorpha</taxon>
        <taxon>Ephydroidea</taxon>
        <taxon>Drosophilidae</taxon>
        <taxon>Drosophila</taxon>
        <taxon>Sophophora</taxon>
    </lineage>
</organism>
<comment type="function">
    <text evidence="1 4 5 6">DNA repair enzyme that can remove a variety of covalent adducts from DNA through hydrolysis of a 3'-phosphodiester bond, giving rise to DNA with a free 3' phosphate (PubMed:25331878). Catalyzes the hydrolysis of dead-end complexes between DNA and the topoisomerase I active site tyrosine residue. Hydrolyzes 3'-phosphoglycolates on protruding 3' ends on DNA double-strand breaks due to DNA damage by radiation and free radicals. Acts on blunt-ended double-strand DNA breaks and on single-stranded DNA. May have low 3'exonuclease activity and may be able to remove a single nucleoside from the 3'end of DNA and RNA molecules with 3'hydroxyl groups. Has no exonuclease activity towards DNA or RNA with a 3'phosphate (By similarity). Required for normal polarization of epidermal cells, correct subcellular location of the Crb complex to the apical lateral membrane, and for normal neuronal development during embryonic development (PubMed:15556867). Contributes to maintenance of epithelial cells in response to topoisomerase-1-mediated and oxidative DNA damage (PubMed:25331878). Required for precise axonal bifurcation in mushroom body neurons (PubMed:28465232). Required for maintenance of normal neuronal function (PubMed:25331878).</text>
</comment>
<comment type="subcellular location">
    <subcellularLocation>
        <location evidence="1">Nucleus</location>
    </subcellularLocation>
    <subcellularLocation>
        <location evidence="4">Cytoplasm</location>
    </subcellularLocation>
</comment>
<comment type="tissue specificity">
    <text evidence="3 5 6">Expressed in the body and at higher levels in the head (PubMed:25331878). Expressed in the delaminating neuroblasts and a few ganglion mother cells in stage 11-14 embryonic central nervous system. Weak expression is seen in gonads at stage 16 (PubMed:10940635). Expressed in the brain; expression is regulated by DIP2 (PubMed:28465232).</text>
</comment>
<comment type="developmental stage">
    <text evidence="3">Expressed both maternally and zygotically.</text>
</comment>
<comment type="disruption phenotype">
    <text evidence="5 6">Females have reduced lifespan and reduced climbing ability (PubMed:25331878). RNAi-mediated knockdown in neuronal cells results in adult mushroom bodies with ectopic lobes (PubMed:28465232).</text>
</comment>
<comment type="similarity">
    <text evidence="8">Belongs to the tyrosyl-DNA phosphodiesterase family.</text>
</comment>
<comment type="sequence caution" evidence="8">
    <conflict type="erroneous initiation">
        <sequence resource="EMBL-CDS" id="AAL28358"/>
    </conflict>
</comment>
<accession>Q9VQM4</accession>
<accession>Q95SG3</accession>
<accession>Q9NFM9</accession>
<name>TYDP1_DROME</name>
<keyword id="KW-0963">Cytoplasm</keyword>
<keyword id="KW-0227">DNA damage</keyword>
<keyword id="KW-0234">DNA repair</keyword>
<keyword id="KW-0269">Exonuclease</keyword>
<keyword id="KW-0378">Hydrolase</keyword>
<keyword id="KW-0540">Nuclease</keyword>
<keyword id="KW-0539">Nucleus</keyword>
<keyword id="KW-1185">Reference proteome</keyword>
<keyword id="KW-0677">Repeat</keyword>
<gene>
    <name evidence="7 9" type="primary">Tdp1</name>
    <name evidence="9" type="synonym">gkt</name>
    <name evidence="9" type="ORF">CG8825</name>
    <name evidence="9" type="ORF">CG8826</name>
</gene>
<evidence type="ECO:0000250" key="1">
    <source>
        <dbReference type="UniProtKB" id="Q9NUW8"/>
    </source>
</evidence>
<evidence type="ECO:0000256" key="2">
    <source>
        <dbReference type="SAM" id="MobiDB-lite"/>
    </source>
</evidence>
<evidence type="ECO:0000269" key="3">
    <source>
    </source>
</evidence>
<evidence type="ECO:0000269" key="4">
    <source>
    </source>
</evidence>
<evidence type="ECO:0000269" key="5">
    <source>
    </source>
</evidence>
<evidence type="ECO:0000269" key="6">
    <source>
    </source>
</evidence>
<evidence type="ECO:0000303" key="7">
    <source>
    </source>
</evidence>
<evidence type="ECO:0000305" key="8"/>
<evidence type="ECO:0000312" key="9">
    <source>
        <dbReference type="FlyBase" id="FBgn0260817"/>
    </source>
</evidence>
<evidence type="ECO:0000312" key="10">
    <source>
        <dbReference type="Proteomes" id="UP000000803"/>
    </source>
</evidence>
<dbReference type="EC" id="3.1.4.-" evidence="5"/>
<dbReference type="EMBL" id="AJ277122">
    <property type="protein sequence ID" value="CAB86488.1"/>
    <property type="molecule type" value="mRNA"/>
</dbReference>
<dbReference type="EMBL" id="AE014134">
    <property type="protein sequence ID" value="AAF51141.1"/>
    <property type="molecule type" value="Genomic_DNA"/>
</dbReference>
<dbReference type="EMBL" id="AY051884">
    <property type="protein sequence ID" value="AAK93308.1"/>
    <property type="molecule type" value="mRNA"/>
</dbReference>
<dbReference type="EMBL" id="AY060810">
    <property type="protein sequence ID" value="AAL28358.1"/>
    <property type="status" value="ALT_INIT"/>
    <property type="molecule type" value="mRNA"/>
</dbReference>
<dbReference type="RefSeq" id="NP_523465.2">
    <property type="nucleotide sequence ID" value="NM_078741.4"/>
</dbReference>
<dbReference type="SMR" id="Q9VQM4"/>
<dbReference type="BioGRID" id="59746">
    <property type="interactions" value="6"/>
</dbReference>
<dbReference type="FunCoup" id="Q9VQM4">
    <property type="interactions" value="1591"/>
</dbReference>
<dbReference type="IntAct" id="Q9VQM4">
    <property type="interactions" value="4"/>
</dbReference>
<dbReference type="STRING" id="7227.FBpp0077263"/>
<dbReference type="PaxDb" id="7227-FBpp0077263"/>
<dbReference type="DNASU" id="33530"/>
<dbReference type="EnsemblMetazoa" id="FBtr0077574">
    <property type="protein sequence ID" value="FBpp0077263"/>
    <property type="gene ID" value="FBgn0260817"/>
</dbReference>
<dbReference type="GeneID" id="33530"/>
<dbReference type="KEGG" id="dme:Dmel_CG8825"/>
<dbReference type="AGR" id="FB:FBgn0260817"/>
<dbReference type="CTD" id="33530"/>
<dbReference type="FlyBase" id="FBgn0260817">
    <property type="gene designation" value="Tdp1"/>
</dbReference>
<dbReference type="VEuPathDB" id="VectorBase:FBgn0260817"/>
<dbReference type="eggNOG" id="KOG2031">
    <property type="taxonomic scope" value="Eukaryota"/>
</dbReference>
<dbReference type="GeneTree" id="ENSGT00390000002211"/>
<dbReference type="HOGENOM" id="CLU_010413_3_0_1"/>
<dbReference type="InParanoid" id="Q9VQM4"/>
<dbReference type="OMA" id="PLIKECW"/>
<dbReference type="OrthoDB" id="47785at2759"/>
<dbReference type="PhylomeDB" id="Q9VQM4"/>
<dbReference type="BRENDA" id="3.1.4.1">
    <property type="organism ID" value="1994"/>
</dbReference>
<dbReference type="BioGRID-ORCS" id="33530">
    <property type="hits" value="0 hits in 1 CRISPR screen"/>
</dbReference>
<dbReference type="GenomeRNAi" id="33530"/>
<dbReference type="PRO" id="PR:Q9VQM4"/>
<dbReference type="Proteomes" id="UP000000803">
    <property type="component" value="Chromosome 2L"/>
</dbReference>
<dbReference type="Bgee" id="FBgn0260817">
    <property type="expression patterns" value="Expressed in procephalic neuroblast (Drosophila) and 34 other cell types or tissues"/>
</dbReference>
<dbReference type="GO" id="GO:0005737">
    <property type="term" value="C:cytoplasm"/>
    <property type="evidence" value="ECO:0007669"/>
    <property type="project" value="UniProtKB-SubCell"/>
</dbReference>
<dbReference type="GO" id="GO:0005634">
    <property type="term" value="C:nucleus"/>
    <property type="evidence" value="ECO:0000250"/>
    <property type="project" value="UniProtKB"/>
</dbReference>
<dbReference type="GO" id="GO:0017005">
    <property type="term" value="F:3'-tyrosyl-DNA phosphodiesterase activity"/>
    <property type="evidence" value="ECO:0000315"/>
    <property type="project" value="FlyBase"/>
</dbReference>
<dbReference type="GO" id="GO:0003690">
    <property type="term" value="F:double-stranded DNA binding"/>
    <property type="evidence" value="ECO:0000318"/>
    <property type="project" value="GO_Central"/>
</dbReference>
<dbReference type="GO" id="GO:0004527">
    <property type="term" value="F:exonuclease activity"/>
    <property type="evidence" value="ECO:0007669"/>
    <property type="project" value="UniProtKB-KW"/>
</dbReference>
<dbReference type="GO" id="GO:0003697">
    <property type="term" value="F:single-stranded DNA binding"/>
    <property type="evidence" value="ECO:0000318"/>
    <property type="project" value="GO_Central"/>
</dbReference>
<dbReference type="GO" id="GO:0007417">
    <property type="term" value="P:central nervous system development"/>
    <property type="evidence" value="ECO:0000315"/>
    <property type="project" value="FlyBase"/>
</dbReference>
<dbReference type="GO" id="GO:0006281">
    <property type="term" value="P:DNA repair"/>
    <property type="evidence" value="ECO:0000250"/>
    <property type="project" value="UniProtKB"/>
</dbReference>
<dbReference type="GO" id="GO:0045197">
    <property type="term" value="P:establishment or maintenance of epithelial cell apical/basal polarity"/>
    <property type="evidence" value="ECO:0000315"/>
    <property type="project" value="FlyBase"/>
</dbReference>
<dbReference type="CDD" id="cd09193">
    <property type="entry name" value="PLDc_mTdp1_1"/>
    <property type="match status" value="1"/>
</dbReference>
<dbReference type="CDD" id="cd09195">
    <property type="entry name" value="PLDc_mTdp1_2"/>
    <property type="match status" value="1"/>
</dbReference>
<dbReference type="FunFam" id="3.30.870.10:FF:000039">
    <property type="entry name" value="Probable tyrosyl-DNA phosphodiesterase"/>
    <property type="match status" value="1"/>
</dbReference>
<dbReference type="FunFam" id="3.30.870.10:FF:000051">
    <property type="entry name" value="Probable tyrosyl-DNA phosphodiesterase"/>
    <property type="match status" value="1"/>
</dbReference>
<dbReference type="Gene3D" id="3.30.870.10">
    <property type="entry name" value="Endonuclease Chain A"/>
    <property type="match status" value="2"/>
</dbReference>
<dbReference type="InterPro" id="IPR019406">
    <property type="entry name" value="APLF_PBZ"/>
</dbReference>
<dbReference type="InterPro" id="IPR010347">
    <property type="entry name" value="Tdp1"/>
</dbReference>
<dbReference type="PANTHER" id="PTHR12415">
    <property type="entry name" value="TYROSYL-DNA PHOSPHODIESTERASE 1"/>
    <property type="match status" value="1"/>
</dbReference>
<dbReference type="PANTHER" id="PTHR12415:SF0">
    <property type="entry name" value="TYROSYL-DNA PHOSPHODIESTERASE 1"/>
    <property type="match status" value="1"/>
</dbReference>
<dbReference type="Pfam" id="PF06087">
    <property type="entry name" value="Tyr-DNA_phospho"/>
    <property type="match status" value="1"/>
</dbReference>
<dbReference type="Pfam" id="PF10283">
    <property type="entry name" value="zf-CCHH"/>
    <property type="match status" value="1"/>
</dbReference>
<dbReference type="SUPFAM" id="SSF56024">
    <property type="entry name" value="Phospholipase D/nuclease"/>
    <property type="match status" value="2"/>
</dbReference>
<reference key="1">
    <citation type="journal article" date="2000" name="Mech. Dev.">
        <title>The novel gene glaikit, is expressed during neurogenesis in the Drosophila melanogaster embryo.</title>
        <authorList>
            <person name="Dunlop J."/>
            <person name="Corominas M."/>
            <person name="Serras F."/>
        </authorList>
    </citation>
    <scope>NUCLEOTIDE SEQUENCE [MRNA]</scope>
    <scope>TISSUE SPECIFICITY</scope>
    <scope>DEVELOPMENTAL STAGE</scope>
</reference>
<reference key="2">
    <citation type="journal article" date="2000" name="Science">
        <title>The genome sequence of Drosophila melanogaster.</title>
        <authorList>
            <person name="Adams M.D."/>
            <person name="Celniker S.E."/>
            <person name="Holt R.A."/>
            <person name="Evans C.A."/>
            <person name="Gocayne J.D."/>
            <person name="Amanatides P.G."/>
            <person name="Scherer S.E."/>
            <person name="Li P.W."/>
            <person name="Hoskins R.A."/>
            <person name="Galle R.F."/>
            <person name="George R.A."/>
            <person name="Lewis S.E."/>
            <person name="Richards S."/>
            <person name="Ashburner M."/>
            <person name="Henderson S.N."/>
            <person name="Sutton G.G."/>
            <person name="Wortman J.R."/>
            <person name="Yandell M.D."/>
            <person name="Zhang Q."/>
            <person name="Chen L.X."/>
            <person name="Brandon R.C."/>
            <person name="Rogers Y.-H.C."/>
            <person name="Blazej R.G."/>
            <person name="Champe M."/>
            <person name="Pfeiffer B.D."/>
            <person name="Wan K.H."/>
            <person name="Doyle C."/>
            <person name="Baxter E.G."/>
            <person name="Helt G."/>
            <person name="Nelson C.R."/>
            <person name="Miklos G.L.G."/>
            <person name="Abril J.F."/>
            <person name="Agbayani A."/>
            <person name="An H.-J."/>
            <person name="Andrews-Pfannkoch C."/>
            <person name="Baldwin D."/>
            <person name="Ballew R.M."/>
            <person name="Basu A."/>
            <person name="Baxendale J."/>
            <person name="Bayraktaroglu L."/>
            <person name="Beasley E.M."/>
            <person name="Beeson K.Y."/>
            <person name="Benos P.V."/>
            <person name="Berman B.P."/>
            <person name="Bhandari D."/>
            <person name="Bolshakov S."/>
            <person name="Borkova D."/>
            <person name="Botchan M.R."/>
            <person name="Bouck J."/>
            <person name="Brokstein P."/>
            <person name="Brottier P."/>
            <person name="Burtis K.C."/>
            <person name="Busam D.A."/>
            <person name="Butler H."/>
            <person name="Cadieu E."/>
            <person name="Center A."/>
            <person name="Chandra I."/>
            <person name="Cherry J.M."/>
            <person name="Cawley S."/>
            <person name="Dahlke C."/>
            <person name="Davenport L.B."/>
            <person name="Davies P."/>
            <person name="de Pablos B."/>
            <person name="Delcher A."/>
            <person name="Deng Z."/>
            <person name="Mays A.D."/>
            <person name="Dew I."/>
            <person name="Dietz S.M."/>
            <person name="Dodson K."/>
            <person name="Doup L.E."/>
            <person name="Downes M."/>
            <person name="Dugan-Rocha S."/>
            <person name="Dunkov B.C."/>
            <person name="Dunn P."/>
            <person name="Durbin K.J."/>
            <person name="Evangelista C.C."/>
            <person name="Ferraz C."/>
            <person name="Ferriera S."/>
            <person name="Fleischmann W."/>
            <person name="Fosler C."/>
            <person name="Gabrielian A.E."/>
            <person name="Garg N.S."/>
            <person name="Gelbart W.M."/>
            <person name="Glasser K."/>
            <person name="Glodek A."/>
            <person name="Gong F."/>
            <person name="Gorrell J.H."/>
            <person name="Gu Z."/>
            <person name="Guan P."/>
            <person name="Harris M."/>
            <person name="Harris N.L."/>
            <person name="Harvey D.A."/>
            <person name="Heiman T.J."/>
            <person name="Hernandez J.R."/>
            <person name="Houck J."/>
            <person name="Hostin D."/>
            <person name="Houston K.A."/>
            <person name="Howland T.J."/>
            <person name="Wei M.-H."/>
            <person name="Ibegwam C."/>
            <person name="Jalali M."/>
            <person name="Kalush F."/>
            <person name="Karpen G.H."/>
            <person name="Ke Z."/>
            <person name="Kennison J.A."/>
            <person name="Ketchum K.A."/>
            <person name="Kimmel B.E."/>
            <person name="Kodira C.D."/>
            <person name="Kraft C.L."/>
            <person name="Kravitz S."/>
            <person name="Kulp D."/>
            <person name="Lai Z."/>
            <person name="Lasko P."/>
            <person name="Lei Y."/>
            <person name="Levitsky A.A."/>
            <person name="Li J.H."/>
            <person name="Li Z."/>
            <person name="Liang Y."/>
            <person name="Lin X."/>
            <person name="Liu X."/>
            <person name="Mattei B."/>
            <person name="McIntosh T.C."/>
            <person name="McLeod M.P."/>
            <person name="McPherson D."/>
            <person name="Merkulov G."/>
            <person name="Milshina N.V."/>
            <person name="Mobarry C."/>
            <person name="Morris J."/>
            <person name="Moshrefi A."/>
            <person name="Mount S.M."/>
            <person name="Moy M."/>
            <person name="Murphy B."/>
            <person name="Murphy L."/>
            <person name="Muzny D.M."/>
            <person name="Nelson D.L."/>
            <person name="Nelson D.R."/>
            <person name="Nelson K.A."/>
            <person name="Nixon K."/>
            <person name="Nusskern D.R."/>
            <person name="Pacleb J.M."/>
            <person name="Palazzolo M."/>
            <person name="Pittman G.S."/>
            <person name="Pan S."/>
            <person name="Pollard J."/>
            <person name="Puri V."/>
            <person name="Reese M.G."/>
            <person name="Reinert K."/>
            <person name="Remington K."/>
            <person name="Saunders R.D.C."/>
            <person name="Scheeler F."/>
            <person name="Shen H."/>
            <person name="Shue B.C."/>
            <person name="Siden-Kiamos I."/>
            <person name="Simpson M."/>
            <person name="Skupski M.P."/>
            <person name="Smith T.J."/>
            <person name="Spier E."/>
            <person name="Spradling A.C."/>
            <person name="Stapleton M."/>
            <person name="Strong R."/>
            <person name="Sun E."/>
            <person name="Svirskas R."/>
            <person name="Tector C."/>
            <person name="Turner R."/>
            <person name="Venter E."/>
            <person name="Wang A.H."/>
            <person name="Wang X."/>
            <person name="Wang Z.-Y."/>
            <person name="Wassarman D.A."/>
            <person name="Weinstock G.M."/>
            <person name="Weissenbach J."/>
            <person name="Williams S.M."/>
            <person name="Woodage T."/>
            <person name="Worley K.C."/>
            <person name="Wu D."/>
            <person name="Yang S."/>
            <person name="Yao Q.A."/>
            <person name="Ye J."/>
            <person name="Yeh R.-F."/>
            <person name="Zaveri J.S."/>
            <person name="Zhan M."/>
            <person name="Zhang G."/>
            <person name="Zhao Q."/>
            <person name="Zheng L."/>
            <person name="Zheng X.H."/>
            <person name="Zhong F.N."/>
            <person name="Zhong W."/>
            <person name="Zhou X."/>
            <person name="Zhu S.C."/>
            <person name="Zhu X."/>
            <person name="Smith H.O."/>
            <person name="Gibbs R.A."/>
            <person name="Myers E.W."/>
            <person name="Rubin G.M."/>
            <person name="Venter J.C."/>
        </authorList>
    </citation>
    <scope>NUCLEOTIDE SEQUENCE [LARGE SCALE GENOMIC DNA]</scope>
    <source>
        <strain>Berkeley</strain>
    </source>
</reference>
<reference key="3">
    <citation type="journal article" date="2002" name="Genome Biol.">
        <title>Annotation of the Drosophila melanogaster euchromatic genome: a systematic review.</title>
        <authorList>
            <person name="Misra S."/>
            <person name="Crosby M.A."/>
            <person name="Mungall C.J."/>
            <person name="Matthews B.B."/>
            <person name="Campbell K.S."/>
            <person name="Hradecky P."/>
            <person name="Huang Y."/>
            <person name="Kaminker J.S."/>
            <person name="Millburn G.H."/>
            <person name="Prochnik S.E."/>
            <person name="Smith C.D."/>
            <person name="Tupy J.L."/>
            <person name="Whitfield E.J."/>
            <person name="Bayraktaroglu L."/>
            <person name="Berman B.P."/>
            <person name="Bettencourt B.R."/>
            <person name="Celniker S.E."/>
            <person name="de Grey A.D.N.J."/>
            <person name="Drysdale R.A."/>
            <person name="Harris N.L."/>
            <person name="Richter J."/>
            <person name="Russo S."/>
            <person name="Schroeder A.J."/>
            <person name="Shu S.Q."/>
            <person name="Stapleton M."/>
            <person name="Yamada C."/>
            <person name="Ashburner M."/>
            <person name="Gelbart W.M."/>
            <person name="Rubin G.M."/>
            <person name="Lewis S.E."/>
        </authorList>
    </citation>
    <scope>GENOME REANNOTATION</scope>
    <source>
        <strain>Berkeley</strain>
    </source>
</reference>
<reference key="4">
    <citation type="journal article" date="2002" name="Genome Biol.">
        <title>A Drosophila full-length cDNA resource.</title>
        <authorList>
            <person name="Stapleton M."/>
            <person name="Carlson J.W."/>
            <person name="Brokstein P."/>
            <person name="Yu C."/>
            <person name="Champe M."/>
            <person name="George R.A."/>
            <person name="Guarin H."/>
            <person name="Kronmiller B."/>
            <person name="Pacleb J.M."/>
            <person name="Park S."/>
            <person name="Wan K.H."/>
            <person name="Rubin G.M."/>
            <person name="Celniker S.E."/>
        </authorList>
    </citation>
    <scope>NUCLEOTIDE SEQUENCE [LARGE SCALE MRNA]</scope>
    <source>
        <strain>Berkeley</strain>
        <tissue>Embryo</tissue>
        <tissue>Head</tissue>
    </source>
</reference>
<reference key="5">
    <citation type="journal article" date="2004" name="Curr. Biol.">
        <title>glaikit is essential for the formation of epithelial polarity and neuronal development.</title>
        <authorList>
            <person name="Dunlop J."/>
            <person name="Morin X."/>
            <person name="Corominas M."/>
            <person name="Serras F."/>
            <person name="Tear G."/>
        </authorList>
    </citation>
    <scope>FUNCTION</scope>
    <scope>SUBCELLULAR LOCATION</scope>
</reference>
<reference key="6">
    <citation type="journal article" date="2014" name="Proc. Natl. Acad. Sci. U.S.A.">
        <title>Neuroprotection and repair of 3'-blocking DNA ends by glaikit (gkt) encoding Drosophila tyrosyl-DNA phosphodiesterase 1 (TDP1).</title>
        <authorList>
            <person name="Guo D."/>
            <person name="Dexheimer T.S."/>
            <person name="Pommier Y."/>
            <person name="Nash H.A."/>
        </authorList>
    </citation>
    <scope>FUNCTION</scope>
    <scope>CATALYTIC ACTIVITY</scope>
    <scope>TISSUE SPECIFICITY</scope>
    <scope>DISRUPTION PHENOTYPE</scope>
</reference>
<reference key="7">
    <citation type="journal article" date="2017" name="Biochem. Biophys. Res. Commun.">
        <title>Identification of glaikit in a genome-wide expression profiling for axonal bifurcation of the mushroom body in Drosophila.</title>
        <authorList>
            <person name="Nitta Y."/>
            <person name="Sugie A."/>
        </authorList>
    </citation>
    <scope>FUNCTION</scope>
    <scope>TISSUE SPECIFICITY</scope>
    <scope>DISRUPTION PHENOTYPE</scope>
</reference>
<sequence>MKECPYGEKCYRKNPIHFGEFSHAHLDAIYAKGNESGDYEIPANYSSEMIHTQLKLLEKLFPKQATNKEQEAHSSSSKPAVTAPVASGSSSSGSLDTNPSGSSASGPAASQDTSNLAKKQKLNAKNIRDYIPVVIEKGGMAKKLERAAPYNMFLTAITDSKPTHSEPLSITLQEILDESLGEIESTVQINFMVDIGWLLGHYYFAGILDKPLLLLYGDESPELLSIGKFKQQVTAIRVKMPTPFATSHTKMMFLGYSDGSMRVVISTANLYEDDWHNRTQGLWISPKLPALPVDADTGAGESLTGFKQDLMLYLVEYKISQLQPWIARIRNSDFSAINVFFLGSVPGGHREGSVRGHPWGHARLASLLAKHAAPIDDRIPVVCQSSSIGSLGANVQAWIQQDFVNSLKKDSTPVGKLRQMPPFKMIYPSYGNVAGSHDGMLGGGCLPYGKNTNDKQPWLKDYLQQWKSSDRFRSRAMPHIKSYTRFNLEDQSVYWFVLTSANLSKAAWGCFNKNSNIQPCLRIANYEAGVLFLPRFVTGEDTFPLGNNRDGVPAFPLPYDVPLTPYAPDDKPFLMDYLQG</sequence>
<protein>
    <recommendedName>
        <fullName evidence="7 9">Tyrosyl-DNA phosphodiesterase 1</fullName>
        <shortName>Tyr-DNA phosphodiesterase</shortName>
        <ecNumber evidence="5">3.1.4.-</ecNumber>
    </recommendedName>
    <alternativeName>
        <fullName evidence="9">Protein glaikit</fullName>
    </alternativeName>
</protein>
<proteinExistence type="evidence at protein level"/>
<feature type="chain" id="PRO_0000212489" description="Tyrosyl-DNA phosphodiesterase 1">
    <location>
        <begin position="1"/>
        <end position="580"/>
    </location>
</feature>
<feature type="region of interest" description="Disordered" evidence="2">
    <location>
        <begin position="65"/>
        <end position="117"/>
    </location>
</feature>
<feature type="region of interest" description="Interaction with DNA" evidence="1">
    <location>
        <begin position="387"/>
        <end position="390"/>
    </location>
</feature>
<feature type="compositionally biased region" description="Low complexity" evidence="2">
    <location>
        <begin position="87"/>
        <end position="110"/>
    </location>
</feature>
<feature type="active site" description="Nucleophile" evidence="1">
    <location>
        <position position="248"/>
    </location>
</feature>
<feature type="active site" description="Proton donor/acceptor" evidence="1">
    <location>
        <position position="479"/>
    </location>
</feature>
<feature type="binding site" evidence="1">
    <location>
        <position position="250"/>
    </location>
    <ligand>
        <name>substrate</name>
    </ligand>
</feature>
<feature type="binding site" evidence="1">
    <location>
        <position position="481"/>
    </location>
    <ligand>
        <name>substrate</name>
    </ligand>
</feature>
<feature type="site" description="Interaction with DNA" evidence="1">
    <location>
        <position position="504"/>
    </location>
</feature>
<feature type="sequence conflict" description="In Ref. 1; CAB86488." evidence="8" ref="1">
    <original>L</original>
    <variation>V</variation>
    <location>
        <position position="214"/>
    </location>
</feature>
<feature type="sequence conflict" description="In Ref. 1; CAB86488." evidence="8" ref="1">
    <original>G</original>
    <variation>R</variation>
    <location>
        <position position="300"/>
    </location>
</feature>
<feature type="sequence conflict" description="In Ref. 1; CAB86488." evidence="8" ref="1">
    <original>L</original>
    <variation>R</variation>
    <location>
        <position position="310"/>
    </location>
</feature>
<feature type="sequence conflict" description="In Ref. 1; CAB86488." evidence="8" ref="1">
    <original>A</original>
    <variation>P</variation>
    <location>
        <position position="327"/>
    </location>
</feature>
<feature type="sequence conflict" description="In Ref. 1; CAB86488." evidence="8" ref="1">
    <original>L</original>
    <variation>P</variation>
    <location>
        <position position="407"/>
    </location>
</feature>
<feature type="sequence conflict" description="In Ref. 1; CAB86488." evidence="8" ref="1">
    <original>K</original>
    <variation>N</variation>
    <location>
        <position position="455"/>
    </location>
</feature>